<sequence>MSPDLTHRSPEELTPEDSQAIGDLARRAARADGVDPLNEESLLALRHRTPGRVHVLAHDQDRLVGYGTLAHGSAEVVTDPDARKAGLGGRLLDALLEHDPELLLWAHGDMDGGRRLAASRGMVPRRPLWRMERPVAGEFSELPPVELPEGISVRPFVAGQDDEAWLRVNSRAFADHAEQGRMTAEDLTARTQEDWFDASGFLLLVDDTRDGEVVGFHWTKVDQLPVGEVYVVGVDPERQGEGLGRVATLVGLHHLADRGVETVELYVDGDNRAAVTTYGRLGFERAAVDVQYGPPV</sequence>
<feature type="chain" id="PRO_0000400264" description="Mycothiol acetyltransferase">
    <location>
        <begin position="1"/>
        <end position="296"/>
    </location>
</feature>
<feature type="domain" description="N-acetyltransferase 1" evidence="1">
    <location>
        <begin position="8"/>
        <end position="146"/>
    </location>
</feature>
<feature type="domain" description="N-acetyltransferase 2" evidence="1">
    <location>
        <begin position="151"/>
        <end position="296"/>
    </location>
</feature>
<feature type="binding site" evidence="1">
    <location>
        <position position="39"/>
    </location>
    <ligand>
        <name>1D-myo-inositol 2-(L-cysteinylamino)-2-deoxy-alpha-D-glucopyranoside</name>
        <dbReference type="ChEBI" id="CHEBI:58887"/>
    </ligand>
</feature>
<feature type="binding site" evidence="1">
    <location>
        <begin position="76"/>
        <end position="78"/>
    </location>
    <ligand>
        <name>acetyl-CoA</name>
        <dbReference type="ChEBI" id="CHEBI:57288"/>
        <label>1</label>
    </ligand>
</feature>
<feature type="binding site" evidence="1">
    <location>
        <position position="178"/>
    </location>
    <ligand>
        <name>1D-myo-inositol 2-(L-cysteinylamino)-2-deoxy-alpha-D-glucopyranoside</name>
        <dbReference type="ChEBI" id="CHEBI:58887"/>
    </ligand>
</feature>
<feature type="binding site" evidence="1">
    <location>
        <position position="220"/>
    </location>
    <ligand>
        <name>1D-myo-inositol 2-(L-cysteinylamino)-2-deoxy-alpha-D-glucopyranoside</name>
        <dbReference type="ChEBI" id="CHEBI:58887"/>
    </ligand>
</feature>
<feature type="binding site" evidence="1">
    <location>
        <position position="228"/>
    </location>
    <ligand>
        <name>1D-myo-inositol 2-(L-cysteinylamino)-2-deoxy-alpha-D-glucopyranoside</name>
        <dbReference type="ChEBI" id="CHEBI:58887"/>
    </ligand>
</feature>
<feature type="binding site" evidence="1">
    <location>
        <begin position="232"/>
        <end position="234"/>
    </location>
    <ligand>
        <name>acetyl-CoA</name>
        <dbReference type="ChEBI" id="CHEBI:57288"/>
        <label>2</label>
    </ligand>
</feature>
<feature type="binding site" evidence="1">
    <location>
        <begin position="239"/>
        <end position="245"/>
    </location>
    <ligand>
        <name>acetyl-CoA</name>
        <dbReference type="ChEBI" id="CHEBI:57288"/>
        <label>2</label>
    </ligand>
</feature>
<feature type="binding site" evidence="1">
    <location>
        <position position="266"/>
    </location>
    <ligand>
        <name>1D-myo-inositol 2-(L-cysteinylamino)-2-deoxy-alpha-D-glucopyranoside</name>
        <dbReference type="ChEBI" id="CHEBI:58887"/>
    </ligand>
</feature>
<protein>
    <recommendedName>
        <fullName evidence="1">Mycothiol acetyltransferase</fullName>
        <shortName evidence="1">MSH acetyltransferase</shortName>
        <ecNumber evidence="1">2.3.1.189</ecNumber>
    </recommendedName>
    <alternativeName>
        <fullName evidence="1">Mycothiol synthase</fullName>
    </alternativeName>
</protein>
<comment type="function">
    <text evidence="1">Catalyzes the transfer of acetyl from acetyl-CoA to desacetylmycothiol (Cys-GlcN-Ins) to form mycothiol.</text>
</comment>
<comment type="catalytic activity">
    <reaction evidence="1">
        <text>1D-myo-inositol 2-(L-cysteinylamino)-2-deoxy-alpha-D-glucopyranoside + acetyl-CoA = mycothiol + CoA + H(+)</text>
        <dbReference type="Rhea" id="RHEA:26172"/>
        <dbReference type="ChEBI" id="CHEBI:15378"/>
        <dbReference type="ChEBI" id="CHEBI:16768"/>
        <dbReference type="ChEBI" id="CHEBI:57287"/>
        <dbReference type="ChEBI" id="CHEBI:57288"/>
        <dbReference type="ChEBI" id="CHEBI:58887"/>
        <dbReference type="EC" id="2.3.1.189"/>
    </reaction>
</comment>
<comment type="subunit">
    <text evidence="1">Monomer.</text>
</comment>
<comment type="similarity">
    <text evidence="1">Belongs to the acetyltransferase family. MshD subfamily.</text>
</comment>
<gene>
    <name evidence="1" type="primary">mshD</name>
    <name type="ordered locus">Ksed_03540</name>
</gene>
<accession>C7NK43</accession>
<proteinExistence type="inferred from homology"/>
<evidence type="ECO:0000255" key="1">
    <source>
        <dbReference type="HAMAP-Rule" id="MF_01698"/>
    </source>
</evidence>
<reference key="1">
    <citation type="journal article" date="2009" name="Stand. Genomic Sci.">
        <title>Complete genome sequence of Kytococcus sedentarius type strain (541).</title>
        <authorList>
            <person name="Sims D."/>
            <person name="Brettin T."/>
            <person name="Detter J.C."/>
            <person name="Han C."/>
            <person name="Lapidus A."/>
            <person name="Copeland A."/>
            <person name="Glavina Del Rio T."/>
            <person name="Nolan M."/>
            <person name="Chen F."/>
            <person name="Lucas S."/>
            <person name="Tice H."/>
            <person name="Cheng J.F."/>
            <person name="Bruce D."/>
            <person name="Goodwin L."/>
            <person name="Pitluck S."/>
            <person name="Ovchinnikova G."/>
            <person name="Pati A."/>
            <person name="Ivanova N."/>
            <person name="Mavrommatis K."/>
            <person name="Chen A."/>
            <person name="Palaniappan K."/>
            <person name="D'haeseleer P."/>
            <person name="Chain P."/>
            <person name="Bristow J."/>
            <person name="Eisen J.A."/>
            <person name="Markowitz V."/>
            <person name="Hugenholtz P."/>
            <person name="Schneider S."/>
            <person name="Goker M."/>
            <person name="Pukall R."/>
            <person name="Kyrpides N.C."/>
            <person name="Klenk H.P."/>
        </authorList>
    </citation>
    <scope>NUCLEOTIDE SEQUENCE [LARGE SCALE GENOMIC DNA]</scope>
    <source>
        <strain>ATCC 14392 / DSM 20547 / JCM 11482 / CCUG 33030 / NBRC 15357 / NCTC 11040 / CCM 314 / 541</strain>
    </source>
</reference>
<organism>
    <name type="scientific">Kytococcus sedentarius (strain ATCC 14392 / DSM 20547 / JCM 11482 / CCUG 33030 / NBRC 15357 / NCTC 11040 / CCM 314 / 541)</name>
    <name type="common">Micrococcus sedentarius</name>
    <dbReference type="NCBI Taxonomy" id="478801"/>
    <lineage>
        <taxon>Bacteria</taxon>
        <taxon>Bacillati</taxon>
        <taxon>Actinomycetota</taxon>
        <taxon>Actinomycetes</taxon>
        <taxon>Micrococcales</taxon>
        <taxon>Kytococcaceae</taxon>
        <taxon>Kytococcus</taxon>
    </lineage>
</organism>
<name>MSHD_KYTSD</name>
<keyword id="KW-0012">Acyltransferase</keyword>
<keyword id="KW-0677">Repeat</keyword>
<keyword id="KW-0808">Transferase</keyword>
<dbReference type="EC" id="2.3.1.189" evidence="1"/>
<dbReference type="EMBL" id="CP001686">
    <property type="protein sequence ID" value="ACV05430.1"/>
    <property type="molecule type" value="Genomic_DNA"/>
</dbReference>
<dbReference type="RefSeq" id="WP_012801848.1">
    <property type="nucleotide sequence ID" value="NC_013169.1"/>
</dbReference>
<dbReference type="SMR" id="C7NK43"/>
<dbReference type="STRING" id="478801.Ksed_03540"/>
<dbReference type="KEGG" id="kse:Ksed_03540"/>
<dbReference type="eggNOG" id="COG0456">
    <property type="taxonomic scope" value="Bacteria"/>
</dbReference>
<dbReference type="HOGENOM" id="CLU_068014_0_0_11"/>
<dbReference type="Proteomes" id="UP000006666">
    <property type="component" value="Chromosome"/>
</dbReference>
<dbReference type="GO" id="GO:0035447">
    <property type="term" value="F:mycothiol synthase activity"/>
    <property type="evidence" value="ECO:0007669"/>
    <property type="project" value="UniProtKB-UniRule"/>
</dbReference>
<dbReference type="GO" id="GO:0008999">
    <property type="term" value="F:protein-N-terminal-alanine acetyltransferase activity"/>
    <property type="evidence" value="ECO:0007669"/>
    <property type="project" value="TreeGrafter"/>
</dbReference>
<dbReference type="GO" id="GO:0010125">
    <property type="term" value="P:mycothiol biosynthetic process"/>
    <property type="evidence" value="ECO:0007669"/>
    <property type="project" value="UniProtKB-UniRule"/>
</dbReference>
<dbReference type="CDD" id="cd04301">
    <property type="entry name" value="NAT_SF"/>
    <property type="match status" value="2"/>
</dbReference>
<dbReference type="Gene3D" id="3.40.630.30">
    <property type="match status" value="1"/>
</dbReference>
<dbReference type="HAMAP" id="MF_01698">
    <property type="entry name" value="MshD"/>
    <property type="match status" value="1"/>
</dbReference>
<dbReference type="InterPro" id="IPR016181">
    <property type="entry name" value="Acyl_CoA_acyltransferase"/>
</dbReference>
<dbReference type="InterPro" id="IPR000182">
    <property type="entry name" value="GNAT_dom"/>
</dbReference>
<dbReference type="InterPro" id="IPR050276">
    <property type="entry name" value="MshD_Acetyltransferase"/>
</dbReference>
<dbReference type="InterPro" id="IPR017813">
    <property type="entry name" value="Mycothiol_AcTrfase"/>
</dbReference>
<dbReference type="NCBIfam" id="TIGR03448">
    <property type="entry name" value="mycothiol_MshD"/>
    <property type="match status" value="1"/>
</dbReference>
<dbReference type="PANTHER" id="PTHR43617">
    <property type="entry name" value="L-AMINO ACID N-ACETYLTRANSFERASE"/>
    <property type="match status" value="1"/>
</dbReference>
<dbReference type="PANTHER" id="PTHR43617:SF31">
    <property type="entry name" value="MYCOTHIOL ACETYLTRANSFERASE"/>
    <property type="match status" value="1"/>
</dbReference>
<dbReference type="Pfam" id="PF00583">
    <property type="entry name" value="Acetyltransf_1"/>
    <property type="match status" value="2"/>
</dbReference>
<dbReference type="PIRSF" id="PIRSF021524">
    <property type="entry name" value="MSH_acetyltransferase"/>
    <property type="match status" value="1"/>
</dbReference>
<dbReference type="SUPFAM" id="SSF55729">
    <property type="entry name" value="Acyl-CoA N-acyltransferases (Nat)"/>
    <property type="match status" value="2"/>
</dbReference>
<dbReference type="PROSITE" id="PS51186">
    <property type="entry name" value="GNAT"/>
    <property type="match status" value="2"/>
</dbReference>